<organism>
    <name type="scientific">Borrelia hermsii (strain HS1 / DAH)</name>
    <dbReference type="NCBI Taxonomy" id="314723"/>
    <lineage>
        <taxon>Bacteria</taxon>
        <taxon>Pseudomonadati</taxon>
        <taxon>Spirochaetota</taxon>
        <taxon>Spirochaetia</taxon>
        <taxon>Spirochaetales</taxon>
        <taxon>Borreliaceae</taxon>
        <taxon>Borrelia</taxon>
    </lineage>
</organism>
<keyword id="KW-0687">Ribonucleoprotein</keyword>
<keyword id="KW-0689">Ribosomal protein</keyword>
<keyword id="KW-0694">RNA-binding</keyword>
<keyword id="KW-0699">rRNA-binding</keyword>
<protein>
    <recommendedName>
        <fullName evidence="1">Small ribosomal subunit protein bS18</fullName>
    </recommendedName>
    <alternativeName>
        <fullName evidence="3">30S ribosomal protein S18</fullName>
    </alternativeName>
</protein>
<sequence length="96" mass="11546">MYKDVDSHQRDSRSDGHQDGFKKNPNFRFFKKKTCKFCDMDRVPDYKEFDFLKKFITEQGKILPRRITGTSAKHQRRLALEIKKARYMALLPFVKQ</sequence>
<feature type="chain" id="PRO_1000114399" description="Small ribosomal subunit protein bS18">
    <location>
        <begin position="1"/>
        <end position="96"/>
    </location>
</feature>
<feature type="region of interest" description="Disordered" evidence="2">
    <location>
        <begin position="1"/>
        <end position="25"/>
    </location>
</feature>
<feature type="compositionally biased region" description="Basic and acidic residues" evidence="2">
    <location>
        <begin position="1"/>
        <end position="22"/>
    </location>
</feature>
<reference key="1">
    <citation type="submission" date="2004-12" db="EMBL/GenBank/DDBJ databases">
        <title>The genome sequence of Borrelia hermsii and Borrelia turicatae: comparative analysis of two agents of endemic N. America relapsing fever.</title>
        <authorList>
            <person name="Porcella S.F."/>
            <person name="Raffel S.J."/>
            <person name="Schrumpf M.E."/>
            <person name="Montgomery B."/>
            <person name="Smith T."/>
            <person name="Schwan T.G."/>
        </authorList>
    </citation>
    <scope>NUCLEOTIDE SEQUENCE [LARGE SCALE GENOMIC DNA]</scope>
    <source>
        <strain>HS1 / DAH</strain>
    </source>
</reference>
<gene>
    <name evidence="1" type="primary">rpsR</name>
    <name type="ordered locus">BH0113</name>
</gene>
<evidence type="ECO:0000255" key="1">
    <source>
        <dbReference type="HAMAP-Rule" id="MF_00270"/>
    </source>
</evidence>
<evidence type="ECO:0000256" key="2">
    <source>
        <dbReference type="SAM" id="MobiDB-lite"/>
    </source>
</evidence>
<evidence type="ECO:0000305" key="3"/>
<name>RS18_BORHD</name>
<proteinExistence type="inferred from homology"/>
<comment type="function">
    <text evidence="1">Binds as a heterodimer with protein bS6 to the central domain of the 16S rRNA, where it helps stabilize the platform of the 30S subunit.</text>
</comment>
<comment type="subunit">
    <text evidence="1">Part of the 30S ribosomal subunit. Forms a tight heterodimer with protein bS6.</text>
</comment>
<comment type="similarity">
    <text evidence="1">Belongs to the bacterial ribosomal protein bS18 family.</text>
</comment>
<dbReference type="EMBL" id="CP000048">
    <property type="protein sequence ID" value="AAX16634.1"/>
    <property type="molecule type" value="Genomic_DNA"/>
</dbReference>
<dbReference type="RefSeq" id="WP_012421891.1">
    <property type="nucleotide sequence ID" value="NZ_CP073136.1"/>
</dbReference>
<dbReference type="SMR" id="B2S1U7"/>
<dbReference type="GeneID" id="71842924"/>
<dbReference type="KEGG" id="bhr:BH0113"/>
<dbReference type="HOGENOM" id="CLU_148710_0_2_12"/>
<dbReference type="Proteomes" id="UP000008834">
    <property type="component" value="Chromosome"/>
</dbReference>
<dbReference type="GO" id="GO:0022627">
    <property type="term" value="C:cytosolic small ribosomal subunit"/>
    <property type="evidence" value="ECO:0007669"/>
    <property type="project" value="TreeGrafter"/>
</dbReference>
<dbReference type="GO" id="GO:0070181">
    <property type="term" value="F:small ribosomal subunit rRNA binding"/>
    <property type="evidence" value="ECO:0007669"/>
    <property type="project" value="TreeGrafter"/>
</dbReference>
<dbReference type="GO" id="GO:0003735">
    <property type="term" value="F:structural constituent of ribosome"/>
    <property type="evidence" value="ECO:0007669"/>
    <property type="project" value="InterPro"/>
</dbReference>
<dbReference type="GO" id="GO:0006412">
    <property type="term" value="P:translation"/>
    <property type="evidence" value="ECO:0007669"/>
    <property type="project" value="UniProtKB-UniRule"/>
</dbReference>
<dbReference type="Gene3D" id="4.10.640.10">
    <property type="entry name" value="Ribosomal protein S18"/>
    <property type="match status" value="1"/>
</dbReference>
<dbReference type="HAMAP" id="MF_00270">
    <property type="entry name" value="Ribosomal_bS18"/>
    <property type="match status" value="1"/>
</dbReference>
<dbReference type="InterPro" id="IPR001648">
    <property type="entry name" value="Ribosomal_bS18"/>
</dbReference>
<dbReference type="InterPro" id="IPR018275">
    <property type="entry name" value="Ribosomal_bS18_CS"/>
</dbReference>
<dbReference type="InterPro" id="IPR036870">
    <property type="entry name" value="Ribosomal_bS18_sf"/>
</dbReference>
<dbReference type="NCBIfam" id="TIGR00165">
    <property type="entry name" value="S18"/>
    <property type="match status" value="1"/>
</dbReference>
<dbReference type="PANTHER" id="PTHR13479">
    <property type="entry name" value="30S RIBOSOMAL PROTEIN S18"/>
    <property type="match status" value="1"/>
</dbReference>
<dbReference type="PANTHER" id="PTHR13479:SF40">
    <property type="entry name" value="SMALL RIBOSOMAL SUBUNIT PROTEIN BS18M"/>
    <property type="match status" value="1"/>
</dbReference>
<dbReference type="Pfam" id="PF01084">
    <property type="entry name" value="Ribosomal_S18"/>
    <property type="match status" value="1"/>
</dbReference>
<dbReference type="PRINTS" id="PR00974">
    <property type="entry name" value="RIBOSOMALS18"/>
</dbReference>
<dbReference type="SUPFAM" id="SSF46911">
    <property type="entry name" value="Ribosomal protein S18"/>
    <property type="match status" value="1"/>
</dbReference>
<dbReference type="PROSITE" id="PS00057">
    <property type="entry name" value="RIBOSOMAL_S18"/>
    <property type="match status" value="1"/>
</dbReference>
<accession>B2S1U7</accession>